<organism>
    <name type="scientific">Oryza sativa</name>
    <name type="common">Rice</name>
    <dbReference type="NCBI Taxonomy" id="4530"/>
    <lineage>
        <taxon>Eukaryota</taxon>
        <taxon>Viridiplantae</taxon>
        <taxon>Streptophyta</taxon>
        <taxon>Embryophyta</taxon>
        <taxon>Tracheophyta</taxon>
        <taxon>Spermatophyta</taxon>
        <taxon>Magnoliopsida</taxon>
        <taxon>Liliopsida</taxon>
        <taxon>Poales</taxon>
        <taxon>Poaceae</taxon>
        <taxon>BOP clade</taxon>
        <taxon>Oryzoideae</taxon>
        <taxon>Oryzeae</taxon>
        <taxon>Oryzinae</taxon>
        <taxon>Oryza</taxon>
    </lineage>
</organism>
<feature type="chain" id="PRO_0000124484" description="Small ribosomal subunit protein uS7cz/uS7cy">
    <location>
        <begin position="1"/>
        <end position="156"/>
    </location>
</feature>
<comment type="function">
    <text evidence="1">One of the primary rRNA binding proteins, it binds directly to 16S rRNA where it nucleates assembly of the head domain of the 30S subunit.</text>
</comment>
<comment type="subunit">
    <text>Part of the 30S ribosomal subunit.</text>
</comment>
<comment type="subcellular location">
    <subcellularLocation>
        <location>Plastid</location>
        <location>Chloroplast</location>
    </subcellularLocation>
</comment>
<comment type="similarity">
    <text evidence="3">Belongs to the universal ribosomal protein uS7 family.</text>
</comment>
<comment type="sequence caution" evidence="3">
    <conflict type="erroneous initiation">
        <sequence resource="EMBL-CDS" id="AAS46214"/>
    </conflict>
    <text>Truncated N-terminus.</text>
</comment>
<comment type="sequence caution" evidence="3">
    <conflict type="erroneous initiation">
        <sequence resource="EMBL-CDS" id="AAS46227"/>
    </conflict>
    <text>Truncated N-terminus.</text>
</comment>
<protein>
    <recommendedName>
        <fullName evidence="2">Small ribosomal subunit protein uS7cz/uS7cy</fullName>
    </recommendedName>
    <alternativeName>
        <fullName>30S ribosomal protein S7, chloroplastic</fullName>
    </alternativeName>
</protein>
<geneLocation type="chloroplast"/>
<name>RR7_ORYSA</name>
<gene>
    <name type="primary">rps7-A</name>
    <name type="ORF">PA134</name>
</gene>
<gene>
    <name type="primary">rps7-B</name>
    <name type="ORF">PA206</name>
</gene>
<keyword id="KW-0150">Chloroplast</keyword>
<keyword id="KW-0934">Plastid</keyword>
<keyword id="KW-0687">Ribonucleoprotein</keyword>
<keyword id="KW-0689">Ribosomal protein</keyword>
<keyword id="KW-0694">RNA-binding</keyword>
<keyword id="KW-0699">rRNA-binding</keyword>
<sequence length="156" mass="17629">MSRRGTAEKRTAKSDPIFRNRLVNMVVNRIMKDGKKSLAYQILYRAVKKIQQKTETNPLLVLRQAIRRVTPNIGVKTRRNKKGSTRKVPIEIGSKQGRALAIRWLLEASQKRPGRNMAFKLSSELVDAAKGGGGAIRKKEATHRMAEANRALAHFR</sequence>
<evidence type="ECO:0000250" key="1"/>
<evidence type="ECO:0000255" key="2">
    <source>
        <dbReference type="HAMAP-Rule" id="MF_00480"/>
    </source>
</evidence>
<evidence type="ECO:0000305" key="3"/>
<accession>P0C489</accession>
<accession>P05424</accession>
<accession>P62730</accession>
<accession>Q6QXY0</accession>
<accession>Q6QY30</accession>
<reference key="1">
    <citation type="journal article" date="2004" name="Plant Physiol.">
        <title>A comparison of rice chloroplast genomes.</title>
        <authorList>
            <person name="Tang J."/>
            <person name="Xia H."/>
            <person name="Cao M."/>
            <person name="Zhang X."/>
            <person name="Zeng W."/>
            <person name="Hu S."/>
            <person name="Tong W."/>
            <person name="Wang J."/>
            <person name="Wang J."/>
            <person name="Yu J."/>
            <person name="Yang H."/>
            <person name="Zhu L."/>
        </authorList>
    </citation>
    <scope>NUCLEOTIDE SEQUENCE [LARGE SCALE GENOMIC DNA]</scope>
    <source>
        <strain>cv. PA64s</strain>
    </source>
</reference>
<proteinExistence type="inferred from homology"/>
<dbReference type="EMBL" id="AY522331">
    <property type="protein sequence ID" value="AAS46214.1"/>
    <property type="status" value="ALT_INIT"/>
    <property type="molecule type" value="Genomic_DNA"/>
</dbReference>
<dbReference type="EMBL" id="AY522331">
    <property type="protein sequence ID" value="AAS46227.1"/>
    <property type="status" value="ALT_INIT"/>
    <property type="molecule type" value="Genomic_DNA"/>
</dbReference>
<dbReference type="SMR" id="P0C489"/>
<dbReference type="ExpressionAtlas" id="P0C489">
    <property type="expression patterns" value="baseline"/>
</dbReference>
<dbReference type="GO" id="GO:0009507">
    <property type="term" value="C:chloroplast"/>
    <property type="evidence" value="ECO:0007669"/>
    <property type="project" value="UniProtKB-SubCell"/>
</dbReference>
<dbReference type="GO" id="GO:0009536">
    <property type="term" value="C:plastid"/>
    <property type="evidence" value="ECO:0000305"/>
    <property type="project" value="Gramene"/>
</dbReference>
<dbReference type="GO" id="GO:0015935">
    <property type="term" value="C:small ribosomal subunit"/>
    <property type="evidence" value="ECO:0007669"/>
    <property type="project" value="InterPro"/>
</dbReference>
<dbReference type="GO" id="GO:0019843">
    <property type="term" value="F:rRNA binding"/>
    <property type="evidence" value="ECO:0007669"/>
    <property type="project" value="UniProtKB-UniRule"/>
</dbReference>
<dbReference type="GO" id="GO:0003735">
    <property type="term" value="F:structural constituent of ribosome"/>
    <property type="evidence" value="ECO:0007669"/>
    <property type="project" value="InterPro"/>
</dbReference>
<dbReference type="GO" id="GO:0006412">
    <property type="term" value="P:translation"/>
    <property type="evidence" value="ECO:0007669"/>
    <property type="project" value="UniProtKB-UniRule"/>
</dbReference>
<dbReference type="CDD" id="cd14871">
    <property type="entry name" value="uS7_Chloroplast"/>
    <property type="match status" value="1"/>
</dbReference>
<dbReference type="FunFam" id="1.10.455.10:FF:000001">
    <property type="entry name" value="30S ribosomal protein S7"/>
    <property type="match status" value="1"/>
</dbReference>
<dbReference type="Gene3D" id="1.10.455.10">
    <property type="entry name" value="Ribosomal protein S7 domain"/>
    <property type="match status" value="1"/>
</dbReference>
<dbReference type="HAMAP" id="MF_00480_B">
    <property type="entry name" value="Ribosomal_uS7_B"/>
    <property type="match status" value="1"/>
</dbReference>
<dbReference type="InterPro" id="IPR000235">
    <property type="entry name" value="Ribosomal_uS7"/>
</dbReference>
<dbReference type="InterPro" id="IPR005717">
    <property type="entry name" value="Ribosomal_uS7_bac/org-type"/>
</dbReference>
<dbReference type="InterPro" id="IPR020606">
    <property type="entry name" value="Ribosomal_uS7_CS"/>
</dbReference>
<dbReference type="InterPro" id="IPR023798">
    <property type="entry name" value="Ribosomal_uS7_dom"/>
</dbReference>
<dbReference type="InterPro" id="IPR036823">
    <property type="entry name" value="Ribosomal_uS7_dom_sf"/>
</dbReference>
<dbReference type="NCBIfam" id="TIGR01029">
    <property type="entry name" value="rpsG_bact"/>
    <property type="match status" value="1"/>
</dbReference>
<dbReference type="PANTHER" id="PTHR11205">
    <property type="entry name" value="RIBOSOMAL PROTEIN S7"/>
    <property type="match status" value="1"/>
</dbReference>
<dbReference type="Pfam" id="PF00177">
    <property type="entry name" value="Ribosomal_S7"/>
    <property type="match status" value="1"/>
</dbReference>
<dbReference type="PIRSF" id="PIRSF002122">
    <property type="entry name" value="RPS7p_RPS7a_RPS5e_RPS7o"/>
    <property type="match status" value="1"/>
</dbReference>
<dbReference type="SUPFAM" id="SSF47973">
    <property type="entry name" value="Ribosomal protein S7"/>
    <property type="match status" value="1"/>
</dbReference>
<dbReference type="PROSITE" id="PS00052">
    <property type="entry name" value="RIBOSOMAL_S7"/>
    <property type="match status" value="1"/>
</dbReference>